<protein>
    <recommendedName>
        <fullName evidence="16">CCAAT/enhancer-binding protein alpha</fullName>
        <shortName>C/EBP alpha</shortName>
    </recommendedName>
</protein>
<comment type="function">
    <text evidence="1 2 5 8 11 12">Transcription factor that coordinates proliferation arrest and the differentiation of myeloid progenitors, adipocytes, hepatocytes, and cells of the lung and the placenta (PubMed:11672531, PubMed:16735515, PubMed:20176812, PubMed:8367486). Binds directly to the consensus DNA sequence 5'-T[TG]NNGNAA[TG]-3' acting as an activator on distinct target genes. During early embryogenesis, plays essential and redundant functions with CEBPB (By similarity). Essential for the transition from common myeloid progenitors (CMP) to granulocyte/monocyte progenitors (GMP) (PubMed:11672531). Critical for the proper development of the liver and the lung (By similarity). Necessary for terminal adipocyte differentiation, is required for postnatal maintenance of systemic energy homeostasis and lipid storage (PubMed:11672531). To regulate these different processes at the proper moment and tissue, interplays with other transcription factors and modulators. Down-regulates the expression of genes that maintain cells in an undifferentiated and proliferative state through E2F1 repression, which is critical for its ability to induce adipocyte and granulocyte terminal differentiation. Reciprocally E2F1 blocks adipocyte differentiation by binding to specific promoters and repressing CEBPA binding to its target gene promoters (PubMed:11672531). Proliferation arrest also depends on a functional binding to SWI/SNF complex (By similarity). In liver, regulates gluconeogenesis and lipogenesis through different mechanisms. To regulate gluconeogenesis, functionally cooperates with FOXO1 binding to IRE-controlled promoters and regulating the expression of target genes such as PCK1 or G6PC1. To modulate lipogenesis, interacts and transcriptionally synergizes with SREBF1 in promoter activation of specific lipogenic target genes such as ACAS2. In adipose tissue, seems to act as FOXO1 coactivator accessing to ADIPOQ promoter through FOXO1 binding sites (By similarity).</text>
</comment>
<comment type="function">
    <molecule>Isoform 3</molecule>
    <text evidence="1 2 12">Can act as dominant-negative. Binds DNA and have transctivation activity, even if much less efficiently than isoform 2. Does not inhibit cell proliferation.</text>
</comment>
<comment type="function">
    <molecule>Isoform 4</molecule>
    <text evidence="1">Directly and specifically enhances ribosomal DNA transcription interacting with RNA polymerase I-specific cofactors and inducing histone acetylation.</text>
</comment>
<comment type="subunit">
    <text evidence="1 2 6 7 9 10 12">Binds DNA as a homodimer and as a heterodimer (PubMed:12578822, PubMed:1884998, PubMed:8367486). Can form stable heterodimers with CEBPB, CEBPD, CEBPE and CEBPG (PubMed:1377818, PubMed:1884998). Can form stable homodimers (also isoform 2 and isoform 3 dimers) and heterodimers with CEBPB (with isoform 2 and isoform 3) and CEBPG (PubMed:1377818, PubMed:8367486). Interacts with PRDM16 (By similarity). Interacts with UBN1 (By similarity). Interacts with ZNF638; this interaction increases transcriptional activation (By similarity). Interacts with the complex TFDP2:E2F1; the interaction prevents CEBPA binding to target gene promoters and represses its transcriptional activity (By similarity). Interacts with RB1 (By similarity). Interacts (when phosphorylated at Ser-193) with CDK2, CDK4, E2F4 and SMARCA2 (By similarity). Interacts with SREBPF1 (By similarity). Interacts with FOXO1 (via the Fork-head domain); the interaction increases when FOXO1 is deacetylated (By similarity). Interacts with SIX1 (By similarity). Interacts (via recognition sequence) with TRIB1 (By similarity).</text>
</comment>
<comment type="subunit">
    <molecule>Isoform 1</molecule>
    <text evidence="10">Interacts with TAF1A and UBTF.</text>
</comment>
<comment type="subunit">
    <molecule>Isoform 4</molecule>
    <text evidence="10">Interacts with NPM1.</text>
</comment>
<comment type="subcellular location">
    <subcellularLocation>
        <location evidence="12">Nucleus</location>
    </subcellularLocation>
</comment>
<comment type="subcellular location">
    <molecule>Isoform 4</molecule>
    <subcellularLocation>
        <location evidence="10">Nucleus</location>
        <location evidence="10">Nucleolus</location>
    </subcellularLocation>
</comment>
<comment type="alternative products">
    <event type="alternative initiation"/>
    <isoform>
        <id>P05554-1</id>
        <name>1</name>
        <sequence type="displayed"/>
    </isoform>
    <isoform>
        <id>P05554-2</id>
        <name>2</name>
        <name evidence="14">CEBPalpha-p42</name>
        <sequence type="described" ref="VSP_057552"/>
    </isoform>
    <isoform>
        <id>P05554-3</id>
        <name>3</name>
        <name evidence="14">C/EBPalpha-p30</name>
        <sequence type="described" ref="VSP_057551"/>
    </isoform>
    <isoform>
        <id>P05554-4</id>
        <name>4</name>
        <name evidence="13">extended-C/EBPalpha</name>
        <sequence type="described" ref="VSP_057609"/>
    </isoform>
</comment>
<comment type="tissue specificity">
    <text evidence="12">Isoform 2 and isoform 3 are expressed in liver (at protein level).</text>
</comment>
<comment type="developmental stage">
    <text evidence="12">Isoform 2 and isoform 3 are not expressed at 1 day before birth, relative concentration of both isoforms increases with the age of the animal, reaching maximal levels in the adulthood.</text>
</comment>
<comment type="domain">
    <text evidence="1">The recognition sequence (54-72) is required for interaction with TRIB1.</text>
</comment>
<comment type="PTM">
    <text evidence="8">Sumoylated, sumoylation blocks the inhibitory effect on cell proliferation by disrupting the interaction with SMARCA2.</text>
</comment>
<comment type="PTM">
    <text evidence="2">Phosphorylation at Ser-193 is required for interaction with CDK2, CDK4 and SWI/SNF complex leading to cell cycle inhibition. Dephosphorylated at Ser-193 by protein phosphatase 2A (PP2A) through PI3K/AKT signaling pathway regulation. Phosphorylation at Thr-222 and Thr-226 by GSK3 is constitutive in adipose tissue and lung. In liver, both Thr-222 and Thr-226 are phosphorylated only during feeding but not during fasting. Phosphorylation of the GSK3 consensus sites selectively decreases transactivation activity on IRE-controlled promoters.</text>
</comment>
<comment type="PTM">
    <text evidence="1">Ubiquitinated by COP1 upon interaction with TRIB1.</text>
</comment>
<comment type="miscellaneous">
    <text evidence="6">The V296A substitution has little effect on the binding of CEBPA to its consensus site (5'-GCAAT-3'), while greatly increasing affinity for cAMP response element (CRE) sites (5'-GTCAT-3').</text>
</comment>
<comment type="miscellaneous">
    <molecule>Isoform 4</molecule>
    <text evidence="10">Mutagenesis in position: 14: RRQR -&gt; AAAA abolishes nucleolar localization and prevents induction of 45S pre-RNA.</text>
</comment>
<comment type="similarity">
    <text evidence="15">Belongs to the bZIP family. C/EBP subfamily.</text>
</comment>
<organism>
    <name type="scientific">Rattus norvegicus</name>
    <name type="common">Rat</name>
    <dbReference type="NCBI Taxonomy" id="10116"/>
    <lineage>
        <taxon>Eukaryota</taxon>
        <taxon>Metazoa</taxon>
        <taxon>Chordata</taxon>
        <taxon>Craniata</taxon>
        <taxon>Vertebrata</taxon>
        <taxon>Euteleostomi</taxon>
        <taxon>Mammalia</taxon>
        <taxon>Eutheria</taxon>
        <taxon>Euarchontoglires</taxon>
        <taxon>Glires</taxon>
        <taxon>Rodentia</taxon>
        <taxon>Myomorpha</taxon>
        <taxon>Muroidea</taxon>
        <taxon>Muridae</taxon>
        <taxon>Murinae</taxon>
        <taxon>Rattus</taxon>
    </lineage>
</organism>
<evidence type="ECO:0000250" key="1">
    <source>
        <dbReference type="UniProtKB" id="P49715"/>
    </source>
</evidence>
<evidence type="ECO:0000250" key="2">
    <source>
        <dbReference type="UniProtKB" id="P53566"/>
    </source>
</evidence>
<evidence type="ECO:0000255" key="3">
    <source>
        <dbReference type="PROSITE-ProRule" id="PRU00978"/>
    </source>
</evidence>
<evidence type="ECO:0000256" key="4">
    <source>
        <dbReference type="SAM" id="MobiDB-lite"/>
    </source>
</evidence>
<evidence type="ECO:0000269" key="5">
    <source>
    </source>
</evidence>
<evidence type="ECO:0000269" key="6">
    <source>
    </source>
</evidence>
<evidence type="ECO:0000269" key="7">
    <source>
    </source>
</evidence>
<evidence type="ECO:0000269" key="8">
    <source>
    </source>
</evidence>
<evidence type="ECO:0000269" key="9">
    <source>
    </source>
</evidence>
<evidence type="ECO:0000269" key="10">
    <source>
    </source>
</evidence>
<evidence type="ECO:0000269" key="11">
    <source>
    </source>
</evidence>
<evidence type="ECO:0000269" key="12">
    <source>
    </source>
</evidence>
<evidence type="ECO:0000303" key="13">
    <source>
    </source>
</evidence>
<evidence type="ECO:0000303" key="14">
    <source>
    </source>
</evidence>
<evidence type="ECO:0000305" key="15"/>
<evidence type="ECO:0000312" key="16">
    <source>
        <dbReference type="RGD" id="2326"/>
    </source>
</evidence>
<evidence type="ECO:0007829" key="17">
    <source>
        <dbReference type="PDB" id="1NWQ"/>
    </source>
</evidence>
<sequence length="358" mass="37371">MESADFYEAEPRPPMSSHLQSPPHAPSNAAFGFPRGAGPAPPPAPPAAPEPLGGICEHETSIDISAYIDPAAFNDEFLADLFQHSRQQEKAKAAAGPAGGGGDFDYPGAPAGPGGAVMSAGAHGPPPGYGCAAAGYLDGRLEPLYERVGAPALRPLVIKQEPREEDEAKQLALAGLFPYQPPPPPPPPHPHASPAHLAAPHLQFQIAHCGQTTMHLQPGHPTPPPTPVPSPHPAPAMGAAGLPGPGGSLKGLAGPHPDLRTGGGGGGGAGAGKAKKSVDKNSNEYRVRRERNNIAVRKSRDKAKQRNVETQQKVLELTSDNDRLRKRVEQLSRELDTLRGIFRQLPESSLVKAMGNCA</sequence>
<reference key="1">
    <citation type="journal article" date="1988" name="Genes Dev.">
        <title>Isolation of a recombinant copy of the gene encoding C/EBP.</title>
        <authorList>
            <person name="Landschulz W.H."/>
            <person name="Johnson P.F."/>
            <person name="Adashi E.Y."/>
            <person name="Graves B.J."/>
            <person name="McKnight S.L."/>
        </authorList>
    </citation>
    <scope>NUCLEOTIDE SEQUENCE [GENOMIC DNA]</scope>
    <scope>PROTEIN SEQUENCE OF 253-269</scope>
    <source>
        <strain>Sprague-Dawley</strain>
    </source>
</reference>
<reference key="2">
    <citation type="journal article" date="1994" name="Genes Dev.">
        <title>A revised sequence of the rat c/ebp gene.</title>
        <authorList>
            <person name="Lincoln A.J."/>
            <person name="Williams S.C."/>
            <person name="Johnson P.F."/>
        </authorList>
    </citation>
    <scope>NUCLEOTIDE SEQUENCE [GENOMIC DNA]</scope>
    <scope>SEQUENCE REVISION</scope>
    <source>
        <strain>Sprague-Dawley</strain>
        <tissue>Liver</tissue>
    </source>
</reference>
<reference key="3">
    <citation type="journal article" date="2004" name="Nature">
        <title>Genome sequence of the Brown Norway rat yields insights into mammalian evolution.</title>
        <authorList>
            <person name="Gibbs R.A."/>
            <person name="Weinstock G.M."/>
            <person name="Metzker M.L."/>
            <person name="Muzny D.M."/>
            <person name="Sodergren E.J."/>
            <person name="Scherer S."/>
            <person name="Scott G."/>
            <person name="Steffen D."/>
            <person name="Worley K.C."/>
            <person name="Burch P.E."/>
            <person name="Okwuonu G."/>
            <person name="Hines S."/>
            <person name="Lewis L."/>
            <person name="Deramo C."/>
            <person name="Delgado O."/>
            <person name="Dugan-Rocha S."/>
            <person name="Miner G."/>
            <person name="Morgan M."/>
            <person name="Hawes A."/>
            <person name="Gill R."/>
            <person name="Holt R.A."/>
            <person name="Adams M.D."/>
            <person name="Amanatides P.G."/>
            <person name="Baden-Tillson H."/>
            <person name="Barnstead M."/>
            <person name="Chin S."/>
            <person name="Evans C.A."/>
            <person name="Ferriera S."/>
            <person name="Fosler C."/>
            <person name="Glodek A."/>
            <person name="Gu Z."/>
            <person name="Jennings D."/>
            <person name="Kraft C.L."/>
            <person name="Nguyen T."/>
            <person name="Pfannkoch C.M."/>
            <person name="Sitter C."/>
            <person name="Sutton G.G."/>
            <person name="Venter J.C."/>
            <person name="Woodage T."/>
            <person name="Smith D."/>
            <person name="Lee H.-M."/>
            <person name="Gustafson E."/>
            <person name="Cahill P."/>
            <person name="Kana A."/>
            <person name="Doucette-Stamm L."/>
            <person name="Weinstock K."/>
            <person name="Fechtel K."/>
            <person name="Weiss R.B."/>
            <person name="Dunn D.M."/>
            <person name="Green E.D."/>
            <person name="Blakesley R.W."/>
            <person name="Bouffard G.G."/>
            <person name="De Jong P.J."/>
            <person name="Osoegawa K."/>
            <person name="Zhu B."/>
            <person name="Marra M."/>
            <person name="Schein J."/>
            <person name="Bosdet I."/>
            <person name="Fjell C."/>
            <person name="Jones S."/>
            <person name="Krzywinski M."/>
            <person name="Mathewson C."/>
            <person name="Siddiqui A."/>
            <person name="Wye N."/>
            <person name="McPherson J."/>
            <person name="Zhao S."/>
            <person name="Fraser C.M."/>
            <person name="Shetty J."/>
            <person name="Shatsman S."/>
            <person name="Geer K."/>
            <person name="Chen Y."/>
            <person name="Abramzon S."/>
            <person name="Nierman W.C."/>
            <person name="Havlak P.H."/>
            <person name="Chen R."/>
            <person name="Durbin K.J."/>
            <person name="Egan A."/>
            <person name="Ren Y."/>
            <person name="Song X.-Z."/>
            <person name="Li B."/>
            <person name="Liu Y."/>
            <person name="Qin X."/>
            <person name="Cawley S."/>
            <person name="Cooney A.J."/>
            <person name="D'Souza L.M."/>
            <person name="Martin K."/>
            <person name="Wu J.Q."/>
            <person name="Gonzalez-Garay M.L."/>
            <person name="Jackson A.R."/>
            <person name="Kalafus K.J."/>
            <person name="McLeod M.P."/>
            <person name="Milosavljevic A."/>
            <person name="Virk D."/>
            <person name="Volkov A."/>
            <person name="Wheeler D.A."/>
            <person name="Zhang Z."/>
            <person name="Bailey J.A."/>
            <person name="Eichler E.E."/>
            <person name="Tuzun E."/>
            <person name="Birney E."/>
            <person name="Mongin E."/>
            <person name="Ureta-Vidal A."/>
            <person name="Woodwark C."/>
            <person name="Zdobnov E."/>
            <person name="Bork P."/>
            <person name="Suyama M."/>
            <person name="Torrents D."/>
            <person name="Alexandersson M."/>
            <person name="Trask B.J."/>
            <person name="Young J.M."/>
            <person name="Huang H."/>
            <person name="Wang H."/>
            <person name="Xing H."/>
            <person name="Daniels S."/>
            <person name="Gietzen D."/>
            <person name="Schmidt J."/>
            <person name="Stevens K."/>
            <person name="Vitt U."/>
            <person name="Wingrove J."/>
            <person name="Camara F."/>
            <person name="Mar Alba M."/>
            <person name="Abril J.F."/>
            <person name="Guigo R."/>
            <person name="Smit A."/>
            <person name="Dubchak I."/>
            <person name="Rubin E.M."/>
            <person name="Couronne O."/>
            <person name="Poliakov A."/>
            <person name="Huebner N."/>
            <person name="Ganten D."/>
            <person name="Goesele C."/>
            <person name="Hummel O."/>
            <person name="Kreitler T."/>
            <person name="Lee Y.-A."/>
            <person name="Monti J."/>
            <person name="Schulz H."/>
            <person name="Zimdahl H."/>
            <person name="Himmelbauer H."/>
            <person name="Lehrach H."/>
            <person name="Jacob H.J."/>
            <person name="Bromberg S."/>
            <person name="Gullings-Handley J."/>
            <person name="Jensen-Seaman M.I."/>
            <person name="Kwitek A.E."/>
            <person name="Lazar J."/>
            <person name="Pasko D."/>
            <person name="Tonellato P.J."/>
            <person name="Twigger S."/>
            <person name="Ponting C.P."/>
            <person name="Duarte J.M."/>
            <person name="Rice S."/>
            <person name="Goodstadt L."/>
            <person name="Beatson S.A."/>
            <person name="Emes R.D."/>
            <person name="Winter E.E."/>
            <person name="Webber C."/>
            <person name="Brandt P."/>
            <person name="Nyakatura G."/>
            <person name="Adetobi M."/>
            <person name="Chiaromonte F."/>
            <person name="Elnitski L."/>
            <person name="Eswara P."/>
            <person name="Hardison R.C."/>
            <person name="Hou M."/>
            <person name="Kolbe D."/>
            <person name="Makova K."/>
            <person name="Miller W."/>
            <person name="Nekrutenko A."/>
            <person name="Riemer C."/>
            <person name="Schwartz S."/>
            <person name="Taylor J."/>
            <person name="Yang S."/>
            <person name="Zhang Y."/>
            <person name="Lindpaintner K."/>
            <person name="Andrews T.D."/>
            <person name="Caccamo M."/>
            <person name="Clamp M."/>
            <person name="Clarke L."/>
            <person name="Curwen V."/>
            <person name="Durbin R.M."/>
            <person name="Eyras E."/>
            <person name="Searle S.M."/>
            <person name="Cooper G.M."/>
            <person name="Batzoglou S."/>
            <person name="Brudno M."/>
            <person name="Sidow A."/>
            <person name="Stone E.A."/>
            <person name="Payseur B.A."/>
            <person name="Bourque G."/>
            <person name="Lopez-Otin C."/>
            <person name="Puente X.S."/>
            <person name="Chakrabarti K."/>
            <person name="Chatterji S."/>
            <person name="Dewey C."/>
            <person name="Pachter L."/>
            <person name="Bray N."/>
            <person name="Yap V.B."/>
            <person name="Caspi A."/>
            <person name="Tesler G."/>
            <person name="Pevzner P.A."/>
            <person name="Haussler D."/>
            <person name="Roskin K.M."/>
            <person name="Baertsch R."/>
            <person name="Clawson H."/>
            <person name="Furey T.S."/>
            <person name="Hinrichs A.S."/>
            <person name="Karolchik D."/>
            <person name="Kent W.J."/>
            <person name="Rosenbloom K.R."/>
            <person name="Trumbower H."/>
            <person name="Weirauch M."/>
            <person name="Cooper D.N."/>
            <person name="Stenson P.D."/>
            <person name="Ma B."/>
            <person name="Brent M."/>
            <person name="Arumugam M."/>
            <person name="Shteynberg D."/>
            <person name="Copley R.R."/>
            <person name="Taylor M.S."/>
            <person name="Riethman H."/>
            <person name="Mudunuri U."/>
            <person name="Peterson J."/>
            <person name="Guyer M."/>
            <person name="Felsenfeld A."/>
            <person name="Old S."/>
            <person name="Mockrin S."/>
            <person name="Collins F.S."/>
        </authorList>
    </citation>
    <scope>NUCLEOTIDE SEQUENCE [LARGE SCALE GENOMIC DNA]</scope>
    <source>
        <strain>Brown Norway</strain>
    </source>
</reference>
<reference key="4">
    <citation type="journal article" date="1991" name="Genes Dev.">
        <title>A family of C/EBP-related proteins capable of forming covalently linked leucine zipper dimers in vitro.</title>
        <authorList>
            <person name="Williams S.C."/>
            <person name="Cantwell C.A."/>
            <person name="Johnson P.F."/>
        </authorList>
    </citation>
    <scope>FUNCTION</scope>
    <scope>SUBUNIT</scope>
</reference>
<reference key="5">
    <citation type="journal article" date="1992" name="Nucleic Acids Res.">
        <title>Molecular cloning of two C/EBP-related proteins that bind to the promoter and the enhancer of the alpha 1-fetoprotein gene. Further analysis of C/EBP beta and C/EBP gamma.</title>
        <authorList>
            <person name="Thomassin H."/>
            <person name="Hamel D."/>
            <person name="Bernier D."/>
            <person name="Guertin M."/>
            <person name="Belanger L."/>
        </authorList>
    </citation>
    <scope>SUBUNIT</scope>
</reference>
<reference key="6">
    <citation type="journal article" date="1993" name="Proc. Natl. Acad. Sci. U.S.A.">
        <title>CCAAT/enhancer-binding protein mRNA is translated into multiple proteins with different transcription activation potentials.</title>
        <authorList>
            <person name="Ossipow V."/>
            <person name="Descombes P."/>
            <person name="Schibler U."/>
        </authorList>
    </citation>
    <scope>FUNCTION</scope>
    <scope>ALTERNATIVE TRANSLATIONAL INITIATION</scope>
    <scope>SUBCELLULAR LOCATION</scope>
    <scope>DEVELOPMENTAL STAGE</scope>
    <scope>TISSUE SPECIFICITY</scope>
    <scope>SUBUNIT</scope>
    <scope>DNA-BINDING</scope>
</reference>
<reference key="7">
    <citation type="journal article" date="2001" name="Cell">
        <title>E2F repression by C/EBPalpha is required for adipogenesis and granulopoiesis in vivo.</title>
        <authorList>
            <person name="Porse B.T."/>
            <person name="Pedersen T.A."/>
            <person name="Xu X."/>
            <person name="Lindberg B."/>
            <person name="Wewer U.M."/>
            <person name="Friis-Hansen L."/>
            <person name="Nerlov C."/>
        </authorList>
    </citation>
    <scope>FUNCTION</scope>
    <scope>MUTAGENESIS OF TYR-285; VAL-287; GLU-290; ILE-294; ARG-297; ASP-301 AND LYS-304</scope>
</reference>
<reference key="8">
    <citation type="journal article" date="2006" name="J. Biol. Chem.">
        <title>Sumoylation of CCAAT/enhancer-binding protein alpha and its functional roles in hepatocyte differentiation.</title>
        <authorList>
            <person name="Sato Y."/>
            <person name="Miyake K."/>
            <person name="Kaneoka H."/>
            <person name="Iijima S."/>
        </authorList>
    </citation>
    <scope>FUNCTION</scope>
    <scope>INTERACTION WITH SMARCA2</scope>
    <scope>SUMOYLATION AT LYS-159</scope>
    <scope>MUTAGENESIS OF LYS-159</scope>
</reference>
<reference key="9">
    <citation type="journal article" date="2010" name="EMBO J.">
        <title>Nucleolar retention of a translational C/EBPalpha isoform stimulates rDNA transcription and cell size.</title>
        <authorList>
            <person name="Muller C."/>
            <person name="Bremer A."/>
            <person name="Schreiber S."/>
            <person name="Eichwald S."/>
            <person name="Calkhoven C.F."/>
        </authorList>
    </citation>
    <scope>ALTERNATIVE INITIATION</scope>
    <scope>IDENTIFICATION OF NON-CANONICAL INITIATION CODON</scope>
    <scope>SUBCELLULAR LOCATION (ISOFORM 4)</scope>
    <scope>MUTAGENESIS (ISOFORM 4)</scope>
    <scope>MUTAGENESIS OF SER-299</scope>
    <scope>INTERACTION WITH NPM1; TAF1A AND UBTF</scope>
</reference>
<reference key="10">
    <citation type="journal article" date="2010" name="Mol. Cell. Biol.">
        <title>Repression of transcriptional activity of C/EBPalpha by E2F-dimerization partner complexes.</title>
        <authorList>
            <person name="Zaragoza K."/>
            <person name="Begay V."/>
            <person name="Schuetz A."/>
            <person name="Heinemann U."/>
            <person name="Leutz A."/>
        </authorList>
    </citation>
    <scope>FUNCTION</scope>
    <scope>INTERACTION WITH TFDP1; TFDP2 AND E2F1</scope>
    <scope>MUTAGENESIS OF GLU-290; ILE-294; ARG-297; ASP-301 AND LYS-304</scope>
</reference>
<reference key="11">
    <citation type="journal article" date="2003" name="J. Biol. Chem.">
        <title>Structural basis for DNA recognition by the basic region leucine zipper transcription factor CCAAT/enhancer-binding protein alpha.</title>
        <authorList>
            <person name="Miller M."/>
            <person name="Shuman J.D."/>
            <person name="Sebastian T."/>
            <person name="Dauter Z."/>
            <person name="Johnson P.F."/>
        </authorList>
    </citation>
    <scope>X-RAY CRYSTALLOGRAPHY (2.80 ANGSTROMS) OF 281-340 IN COMPLEX WITH DNA</scope>
    <scope>SUBUNIT</scope>
    <scope>MUTAGENESIS OF TYR-285; ARG-289; ASN-293 AND VAL-296</scope>
    <scope>SPECIFICITY</scope>
</reference>
<accession>P05554</accession>
<dbReference type="EMBL" id="X12752">
    <property type="protein sequence ID" value="CAA31242.1"/>
    <property type="molecule type" value="Genomic_DNA"/>
</dbReference>
<dbReference type="EMBL" id="AC109741">
    <property type="status" value="NOT_ANNOTATED_CDS"/>
    <property type="molecule type" value="Genomic_DNA"/>
</dbReference>
<dbReference type="PIR" id="S06890">
    <property type="entry name" value="A54265"/>
</dbReference>
<dbReference type="RefSeq" id="NP_001274506.1">
    <molecule id="P05554-4"/>
    <property type="nucleotide sequence ID" value="NM_001287577.1"/>
</dbReference>
<dbReference type="RefSeq" id="NP_001274507.1">
    <molecule id="P05554-2"/>
    <property type="nucleotide sequence ID" value="NM_001287578.1"/>
</dbReference>
<dbReference type="RefSeq" id="NP_001274508.1">
    <molecule id="P05554-3"/>
    <property type="nucleotide sequence ID" value="NM_001287579.1"/>
</dbReference>
<dbReference type="RefSeq" id="NP_036656.1">
    <molecule id="P05554-1"/>
    <property type="nucleotide sequence ID" value="NM_012524.3"/>
</dbReference>
<dbReference type="PDB" id="1NWQ">
    <property type="method" value="X-ray"/>
    <property type="resolution" value="2.80 A"/>
    <property type="chains" value="A/C=281-340"/>
</dbReference>
<dbReference type="PDBsum" id="1NWQ"/>
<dbReference type="SMR" id="P05554"/>
<dbReference type="BioGRID" id="246437">
    <property type="interactions" value="148"/>
</dbReference>
<dbReference type="ComplexPortal" id="CPX-60">
    <property type="entry name" value="bZIP transcription factor complex, Cebpa-Ddit3"/>
</dbReference>
<dbReference type="ComplexPortal" id="CPX-64">
    <property type="entry name" value="bZIP transcription factor complex, Cebpa-Cebpa"/>
</dbReference>
<dbReference type="DIP" id="DIP-28138N"/>
<dbReference type="FunCoup" id="P05554">
    <property type="interactions" value="196"/>
</dbReference>
<dbReference type="IntAct" id="P05554">
    <property type="interactions" value="5"/>
</dbReference>
<dbReference type="STRING" id="10116.ENSRNOP00000063123"/>
<dbReference type="GlyGen" id="P05554">
    <property type="glycosylation" value="2 sites"/>
</dbReference>
<dbReference type="iPTMnet" id="P05554"/>
<dbReference type="PhosphoSitePlus" id="P05554"/>
<dbReference type="PaxDb" id="10116-ENSRNOP00000063123"/>
<dbReference type="GeneID" id="24252"/>
<dbReference type="KEGG" id="rno:24252"/>
<dbReference type="UCSC" id="RGD:2326">
    <molecule id="P05554-1"/>
    <property type="organism name" value="rat"/>
</dbReference>
<dbReference type="AGR" id="RGD:2326"/>
<dbReference type="CTD" id="1050"/>
<dbReference type="RGD" id="2326">
    <property type="gene designation" value="Cebpa"/>
</dbReference>
<dbReference type="eggNOG" id="KOG3119">
    <property type="taxonomic scope" value="Eukaryota"/>
</dbReference>
<dbReference type="HOGENOM" id="CLU_043327_2_0_1"/>
<dbReference type="InParanoid" id="P05554"/>
<dbReference type="OrthoDB" id="85039at9989"/>
<dbReference type="PhylomeDB" id="P05554"/>
<dbReference type="TreeFam" id="TF105008"/>
<dbReference type="Reactome" id="R-RNO-9616222">
    <property type="pathway name" value="Transcriptional regulation of granulopoiesis"/>
</dbReference>
<dbReference type="EvolutionaryTrace" id="P05554"/>
<dbReference type="PRO" id="PR:P05554"/>
<dbReference type="Proteomes" id="UP000002494">
    <property type="component" value="Unplaced"/>
</dbReference>
<dbReference type="GO" id="GO:1990647">
    <property type="term" value="C:C/EBP complex"/>
    <property type="evidence" value="ECO:0000266"/>
    <property type="project" value="RGD"/>
</dbReference>
<dbReference type="GO" id="GO:0036488">
    <property type="term" value="C:CHOP-C/EBP complex"/>
    <property type="evidence" value="ECO:0000353"/>
    <property type="project" value="ParkinsonsUK-UCL"/>
</dbReference>
<dbReference type="GO" id="GO:0016363">
    <property type="term" value="C:nuclear matrix"/>
    <property type="evidence" value="ECO:0000314"/>
    <property type="project" value="RGD"/>
</dbReference>
<dbReference type="GO" id="GO:0005730">
    <property type="term" value="C:nucleolus"/>
    <property type="evidence" value="ECO:0000314"/>
    <property type="project" value="UniProtKB"/>
</dbReference>
<dbReference type="GO" id="GO:0005654">
    <property type="term" value="C:nucleoplasm"/>
    <property type="evidence" value="ECO:0007669"/>
    <property type="project" value="Ensembl"/>
</dbReference>
<dbReference type="GO" id="GO:0005634">
    <property type="term" value="C:nucleus"/>
    <property type="evidence" value="ECO:0000314"/>
    <property type="project" value="UniProtKB"/>
</dbReference>
<dbReference type="GO" id="GO:0032991">
    <property type="term" value="C:protein-containing complex"/>
    <property type="evidence" value="ECO:0000314"/>
    <property type="project" value="RGD"/>
</dbReference>
<dbReference type="GO" id="GO:0035189">
    <property type="term" value="C:Rb-E2F complex"/>
    <property type="evidence" value="ECO:0000314"/>
    <property type="project" value="RGD"/>
</dbReference>
<dbReference type="GO" id="GO:0090575">
    <property type="term" value="C:RNA polymerase II transcription regulator complex"/>
    <property type="evidence" value="ECO:0000266"/>
    <property type="project" value="RGD"/>
</dbReference>
<dbReference type="GO" id="GO:0005667">
    <property type="term" value="C:transcription regulator complex"/>
    <property type="evidence" value="ECO:0000314"/>
    <property type="project" value="RGD"/>
</dbReference>
<dbReference type="GO" id="GO:0003682">
    <property type="term" value="F:chromatin binding"/>
    <property type="evidence" value="ECO:0000266"/>
    <property type="project" value="RGD"/>
</dbReference>
<dbReference type="GO" id="GO:0031490">
    <property type="term" value="F:chromatin DNA binding"/>
    <property type="evidence" value="ECO:0000266"/>
    <property type="project" value="RGD"/>
</dbReference>
<dbReference type="GO" id="GO:0003677">
    <property type="term" value="F:DNA binding"/>
    <property type="evidence" value="ECO:0000314"/>
    <property type="project" value="UniProtKB"/>
</dbReference>
<dbReference type="GO" id="GO:0001228">
    <property type="term" value="F:DNA-binding transcription activator activity, RNA polymerase II-specific"/>
    <property type="evidence" value="ECO:0000314"/>
    <property type="project" value="NTNU_SB"/>
</dbReference>
<dbReference type="GO" id="GO:0003700">
    <property type="term" value="F:DNA-binding transcription factor activity"/>
    <property type="evidence" value="ECO:0000266"/>
    <property type="project" value="RGD"/>
</dbReference>
<dbReference type="GO" id="GO:0000981">
    <property type="term" value="F:DNA-binding transcription factor activity, RNA polymerase II-specific"/>
    <property type="evidence" value="ECO:0000266"/>
    <property type="project" value="RGD"/>
</dbReference>
<dbReference type="GO" id="GO:0140297">
    <property type="term" value="F:DNA-binding transcription factor binding"/>
    <property type="evidence" value="ECO:0000353"/>
    <property type="project" value="UniProtKB"/>
</dbReference>
<dbReference type="GO" id="GO:0042826">
    <property type="term" value="F:histone deacetylase binding"/>
    <property type="evidence" value="ECO:0000353"/>
    <property type="project" value="RGD"/>
</dbReference>
<dbReference type="GO" id="GO:0071837">
    <property type="term" value="F:HMG box domain binding"/>
    <property type="evidence" value="ECO:0000353"/>
    <property type="project" value="UniProtKB"/>
</dbReference>
<dbReference type="GO" id="GO:0042802">
    <property type="term" value="F:identical protein binding"/>
    <property type="evidence" value="ECO:0000266"/>
    <property type="project" value="RGD"/>
</dbReference>
<dbReference type="GO" id="GO:0019900">
    <property type="term" value="F:kinase binding"/>
    <property type="evidence" value="ECO:0000266"/>
    <property type="project" value="RGD"/>
</dbReference>
<dbReference type="GO" id="GO:0019904">
    <property type="term" value="F:protein domain specific binding"/>
    <property type="evidence" value="ECO:0000353"/>
    <property type="project" value="RGD"/>
</dbReference>
<dbReference type="GO" id="GO:0046982">
    <property type="term" value="F:protein heterodimerization activity"/>
    <property type="evidence" value="ECO:0000353"/>
    <property type="project" value="UniProtKB"/>
</dbReference>
<dbReference type="GO" id="GO:0042803">
    <property type="term" value="F:protein homodimerization activity"/>
    <property type="evidence" value="ECO:0000314"/>
    <property type="project" value="UniProtKB"/>
</dbReference>
<dbReference type="GO" id="GO:0044877">
    <property type="term" value="F:protein-containing complex binding"/>
    <property type="evidence" value="ECO:0000314"/>
    <property type="project" value="RGD"/>
</dbReference>
<dbReference type="GO" id="GO:0001163">
    <property type="term" value="F:RNA polymerase I transcription regulatory region sequence-specific DNA binding"/>
    <property type="evidence" value="ECO:0000250"/>
    <property type="project" value="UniProtKB"/>
</dbReference>
<dbReference type="GO" id="GO:0000978">
    <property type="term" value="F:RNA polymerase II cis-regulatory region sequence-specific DNA binding"/>
    <property type="evidence" value="ECO:0000314"/>
    <property type="project" value="NTNU_SB"/>
</dbReference>
<dbReference type="GO" id="GO:0061629">
    <property type="term" value="F:RNA polymerase II-specific DNA-binding transcription factor binding"/>
    <property type="evidence" value="ECO:0000266"/>
    <property type="project" value="RGD"/>
</dbReference>
<dbReference type="GO" id="GO:0043565">
    <property type="term" value="F:sequence-specific DNA binding"/>
    <property type="evidence" value="ECO:0000314"/>
    <property type="project" value="UniProtKB"/>
</dbReference>
<dbReference type="GO" id="GO:0097677">
    <property type="term" value="F:STAT family protein binding"/>
    <property type="evidence" value="ECO:0000266"/>
    <property type="project" value="RGD"/>
</dbReference>
<dbReference type="GO" id="GO:0000976">
    <property type="term" value="F:transcription cis-regulatory region binding"/>
    <property type="evidence" value="ECO:0000266"/>
    <property type="project" value="RGD"/>
</dbReference>
<dbReference type="GO" id="GO:0006953">
    <property type="term" value="P:acute-phase response"/>
    <property type="evidence" value="ECO:0000270"/>
    <property type="project" value="RGD"/>
</dbReference>
<dbReference type="GO" id="GO:0031100">
    <property type="term" value="P:animal organ regeneration"/>
    <property type="evidence" value="ECO:0000270"/>
    <property type="project" value="RGD"/>
</dbReference>
<dbReference type="GO" id="GO:0050873">
    <property type="term" value="P:brown fat cell differentiation"/>
    <property type="evidence" value="ECO:0000266"/>
    <property type="project" value="RGD"/>
</dbReference>
<dbReference type="GO" id="GO:0030154">
    <property type="term" value="P:cell differentiation"/>
    <property type="evidence" value="ECO:0000270"/>
    <property type="project" value="RGD"/>
</dbReference>
<dbReference type="GO" id="GO:0008283">
    <property type="term" value="P:cell population proliferation"/>
    <property type="evidence" value="ECO:0000266"/>
    <property type="project" value="RGD"/>
</dbReference>
<dbReference type="GO" id="GO:0071285">
    <property type="term" value="P:cellular response to lithium ion"/>
    <property type="evidence" value="ECO:0000266"/>
    <property type="project" value="RGD"/>
</dbReference>
<dbReference type="GO" id="GO:0071356">
    <property type="term" value="P:cellular response to tumor necrosis factor"/>
    <property type="evidence" value="ECO:0000266"/>
    <property type="project" value="RGD"/>
</dbReference>
<dbReference type="GO" id="GO:0071466">
    <property type="term" value="P:cellular response to xenobiotic stimulus"/>
    <property type="evidence" value="ECO:0000270"/>
    <property type="project" value="RGD"/>
</dbReference>
<dbReference type="GO" id="GO:0008203">
    <property type="term" value="P:cholesterol metabolic process"/>
    <property type="evidence" value="ECO:0000266"/>
    <property type="project" value="RGD"/>
</dbReference>
<dbReference type="GO" id="GO:0006351">
    <property type="term" value="P:DNA-templated transcription"/>
    <property type="evidence" value="ECO:0007669"/>
    <property type="project" value="InterPro"/>
</dbReference>
<dbReference type="GO" id="GO:0001892">
    <property type="term" value="P:embryonic placenta development"/>
    <property type="evidence" value="ECO:0000266"/>
    <property type="project" value="RGD"/>
</dbReference>
<dbReference type="GO" id="GO:0097009">
    <property type="term" value="P:energy homeostasis"/>
    <property type="evidence" value="ECO:0000266"/>
    <property type="project" value="RGD"/>
</dbReference>
<dbReference type="GO" id="GO:0002070">
    <property type="term" value="P:epithelial cell maturation"/>
    <property type="evidence" value="ECO:0000266"/>
    <property type="project" value="RGD"/>
</dbReference>
<dbReference type="GO" id="GO:0045444">
    <property type="term" value="P:fat cell differentiation"/>
    <property type="evidence" value="ECO:0000314"/>
    <property type="project" value="UniProtKB"/>
</dbReference>
<dbReference type="GO" id="GO:0042593">
    <property type="term" value="P:glucose homeostasis"/>
    <property type="evidence" value="ECO:0000250"/>
    <property type="project" value="UniProtKB"/>
</dbReference>
<dbReference type="GO" id="GO:0030851">
    <property type="term" value="P:granulocyte differentiation"/>
    <property type="evidence" value="ECO:0000250"/>
    <property type="project" value="UniProtKB"/>
</dbReference>
<dbReference type="GO" id="GO:0071425">
    <property type="term" value="P:hematopoietic stem cell proliferation"/>
    <property type="evidence" value="ECO:0000266"/>
    <property type="project" value="RGD"/>
</dbReference>
<dbReference type="GO" id="GO:0048839">
    <property type="term" value="P:inner ear development"/>
    <property type="evidence" value="ECO:0000266"/>
    <property type="project" value="RGD"/>
</dbReference>
<dbReference type="GO" id="GO:0070102">
    <property type="term" value="P:interleukin-6-mediated signaling pathway"/>
    <property type="evidence" value="ECO:0000266"/>
    <property type="project" value="RGD"/>
</dbReference>
<dbReference type="GO" id="GO:0055088">
    <property type="term" value="P:lipid homeostasis"/>
    <property type="evidence" value="ECO:0000250"/>
    <property type="project" value="UniProtKB"/>
</dbReference>
<dbReference type="GO" id="GO:0001889">
    <property type="term" value="P:liver development"/>
    <property type="evidence" value="ECO:0000270"/>
    <property type="project" value="RGD"/>
</dbReference>
<dbReference type="GO" id="GO:0030324">
    <property type="term" value="P:lung development"/>
    <property type="evidence" value="ECO:0000250"/>
    <property type="project" value="UniProtKB"/>
</dbReference>
<dbReference type="GO" id="GO:0030225">
    <property type="term" value="P:macrophage differentiation"/>
    <property type="evidence" value="ECO:0000266"/>
    <property type="project" value="RGD"/>
</dbReference>
<dbReference type="GO" id="GO:0007613">
    <property type="term" value="P:memory"/>
    <property type="evidence" value="ECO:0000270"/>
    <property type="project" value="RGD"/>
</dbReference>
<dbReference type="GO" id="GO:0007005">
    <property type="term" value="P:mitochondrion organization"/>
    <property type="evidence" value="ECO:0000266"/>
    <property type="project" value="RGD"/>
</dbReference>
<dbReference type="GO" id="GO:0030099">
    <property type="term" value="P:myeloid cell differentiation"/>
    <property type="evidence" value="ECO:0000266"/>
    <property type="project" value="RGD"/>
</dbReference>
<dbReference type="GO" id="GO:0045786">
    <property type="term" value="P:negative regulation of cell cycle"/>
    <property type="evidence" value="ECO:0000266"/>
    <property type="project" value="RGD"/>
</dbReference>
<dbReference type="GO" id="GO:0008285">
    <property type="term" value="P:negative regulation of cell population proliferation"/>
    <property type="evidence" value="ECO:0000314"/>
    <property type="project" value="UniProtKB"/>
</dbReference>
<dbReference type="GO" id="GO:0045892">
    <property type="term" value="P:negative regulation of DNA-templated transcription"/>
    <property type="evidence" value="ECO:0000314"/>
    <property type="project" value="UniProtKB"/>
</dbReference>
<dbReference type="GO" id="GO:1902034">
    <property type="term" value="P:negative regulation of hematopoietic stem cell proliferation"/>
    <property type="evidence" value="ECO:0000266"/>
    <property type="project" value="RGD"/>
</dbReference>
<dbReference type="GO" id="GO:0000122">
    <property type="term" value="P:negative regulation of transcription by RNA polymerase II"/>
    <property type="evidence" value="ECO:0000314"/>
    <property type="project" value="ComplexPortal"/>
</dbReference>
<dbReference type="GO" id="GO:0007219">
    <property type="term" value="P:Notch signaling pathway"/>
    <property type="evidence" value="ECO:0000266"/>
    <property type="project" value="RGD"/>
</dbReference>
<dbReference type="GO" id="GO:0002076">
    <property type="term" value="P:osteoblast development"/>
    <property type="evidence" value="ECO:0000270"/>
    <property type="project" value="RGD"/>
</dbReference>
<dbReference type="GO" id="GO:0045893">
    <property type="term" value="P:positive regulation of DNA-templated transcription"/>
    <property type="evidence" value="ECO:0000266"/>
    <property type="project" value="RGD"/>
</dbReference>
<dbReference type="GO" id="GO:0045600">
    <property type="term" value="P:positive regulation of fat cell differentiation"/>
    <property type="evidence" value="ECO:0000315"/>
    <property type="project" value="RGD"/>
</dbReference>
<dbReference type="GO" id="GO:0010628">
    <property type="term" value="P:positive regulation of gene expression"/>
    <property type="evidence" value="ECO:0000266"/>
    <property type="project" value="RGD"/>
</dbReference>
<dbReference type="GO" id="GO:0050729">
    <property type="term" value="P:positive regulation of inflammatory response"/>
    <property type="evidence" value="ECO:0000266"/>
    <property type="project" value="RGD"/>
</dbReference>
<dbReference type="GO" id="GO:0043032">
    <property type="term" value="P:positive regulation of macrophage activation"/>
    <property type="evidence" value="ECO:0000266"/>
    <property type="project" value="RGD"/>
</dbReference>
<dbReference type="GO" id="GO:0045669">
    <property type="term" value="P:positive regulation of osteoblast differentiation"/>
    <property type="evidence" value="ECO:0000266"/>
    <property type="project" value="RGD"/>
</dbReference>
<dbReference type="GO" id="GO:0045944">
    <property type="term" value="P:positive regulation of transcription by RNA polymerase II"/>
    <property type="evidence" value="ECO:0000314"/>
    <property type="project" value="NTNU_SB"/>
</dbReference>
<dbReference type="GO" id="GO:0042127">
    <property type="term" value="P:regulation of cell population proliferation"/>
    <property type="evidence" value="ECO:0000266"/>
    <property type="project" value="RGD"/>
</dbReference>
<dbReference type="GO" id="GO:0006355">
    <property type="term" value="P:regulation of DNA-templated transcription"/>
    <property type="evidence" value="ECO:0000314"/>
    <property type="project" value="UniProtKB"/>
</dbReference>
<dbReference type="GO" id="GO:0006357">
    <property type="term" value="P:regulation of transcription by RNA polymerase II"/>
    <property type="evidence" value="ECO:0000266"/>
    <property type="project" value="RGD"/>
</dbReference>
<dbReference type="GO" id="GO:0071548">
    <property type="term" value="P:response to dexamethasone"/>
    <property type="evidence" value="ECO:0000270"/>
    <property type="project" value="RGD"/>
</dbReference>
<dbReference type="GO" id="GO:0007584">
    <property type="term" value="P:response to nutrient"/>
    <property type="evidence" value="ECO:0000270"/>
    <property type="project" value="RGD"/>
</dbReference>
<dbReference type="GO" id="GO:0080184">
    <property type="term" value="P:response to phenylpropanoid"/>
    <property type="evidence" value="ECO:0000270"/>
    <property type="project" value="RGD"/>
</dbReference>
<dbReference type="GO" id="GO:0033274">
    <property type="term" value="P:response to vitamin B2"/>
    <property type="evidence" value="ECO:0000270"/>
    <property type="project" value="RGD"/>
</dbReference>
<dbReference type="GO" id="GO:0006360">
    <property type="term" value="P:transcription by RNA polymerase I"/>
    <property type="evidence" value="ECO:0000250"/>
    <property type="project" value="UniProtKB"/>
</dbReference>
<dbReference type="GO" id="GO:0000050">
    <property type="term" value="P:urea cycle"/>
    <property type="evidence" value="ECO:0000266"/>
    <property type="project" value="RGD"/>
</dbReference>
<dbReference type="GO" id="GO:0050872">
    <property type="term" value="P:white fat cell differentiation"/>
    <property type="evidence" value="ECO:0000266"/>
    <property type="project" value="RGD"/>
</dbReference>
<dbReference type="CDD" id="cd14711">
    <property type="entry name" value="bZIP_CEBPA"/>
    <property type="match status" value="1"/>
</dbReference>
<dbReference type="FunFam" id="1.20.5.170:FF:000028">
    <property type="entry name" value="CCAAT/enhancer-binding protein beta"/>
    <property type="match status" value="1"/>
</dbReference>
<dbReference type="Gene3D" id="1.20.5.170">
    <property type="match status" value="1"/>
</dbReference>
<dbReference type="InterPro" id="IPR004827">
    <property type="entry name" value="bZIP"/>
</dbReference>
<dbReference type="InterPro" id="IPR046347">
    <property type="entry name" value="bZIP_sf"/>
</dbReference>
<dbReference type="InterPro" id="IPR031106">
    <property type="entry name" value="C/EBP"/>
</dbReference>
<dbReference type="InterPro" id="IPR016468">
    <property type="entry name" value="C/EBP_chordates"/>
</dbReference>
<dbReference type="PANTHER" id="PTHR23334">
    <property type="entry name" value="CCAAT/ENHANCER BINDING PROTEIN"/>
    <property type="match status" value="1"/>
</dbReference>
<dbReference type="PANTHER" id="PTHR23334:SF5">
    <property type="entry name" value="CCAAT_ENHANCER-BINDING PROTEIN ALPHA"/>
    <property type="match status" value="1"/>
</dbReference>
<dbReference type="Pfam" id="PF07716">
    <property type="entry name" value="bZIP_2"/>
    <property type="match status" value="1"/>
</dbReference>
<dbReference type="PIRSF" id="PIRSF005879">
    <property type="entry name" value="CCAAT/enhancer-binding"/>
    <property type="match status" value="1"/>
</dbReference>
<dbReference type="SMART" id="SM00338">
    <property type="entry name" value="BRLZ"/>
    <property type="match status" value="1"/>
</dbReference>
<dbReference type="SUPFAM" id="SSF57959">
    <property type="entry name" value="Leucine zipper domain"/>
    <property type="match status" value="1"/>
</dbReference>
<dbReference type="PROSITE" id="PS50217">
    <property type="entry name" value="BZIP"/>
    <property type="match status" value="1"/>
</dbReference>
<keyword id="KW-0002">3D-structure</keyword>
<keyword id="KW-0007">Acetylation</keyword>
<keyword id="KW-0010">Activator</keyword>
<keyword id="KW-0024">Alternative initiation</keyword>
<keyword id="KW-0217">Developmental protein</keyword>
<keyword id="KW-0903">Direct protein sequencing</keyword>
<keyword id="KW-0238">DNA-binding</keyword>
<keyword id="KW-1017">Isopeptide bond</keyword>
<keyword id="KW-0539">Nucleus</keyword>
<keyword id="KW-0597">Phosphoprotein</keyword>
<keyword id="KW-1185">Reference proteome</keyword>
<keyword id="KW-0804">Transcription</keyword>
<keyword id="KW-0805">Transcription regulation</keyword>
<keyword id="KW-0832">Ubl conjugation</keyword>
<name>CEBPA_RAT</name>
<feature type="chain" id="PRO_0000076615" description="CCAAT/enhancer-binding protein alpha">
    <location>
        <begin position="1"/>
        <end position="358"/>
    </location>
</feature>
<feature type="domain" description="bZIP" evidence="3">
    <location>
        <begin position="282"/>
        <end position="345"/>
    </location>
</feature>
<feature type="DNA-binding region" evidence="6">
    <location>
        <begin position="285"/>
        <end position="300"/>
    </location>
</feature>
<feature type="region of interest" description="Required to repress E2F1:TFDP1-mediated transcription, to inhibit cell cycle and to induce adipocyte differentiation" evidence="5">
    <location>
        <begin position="1"/>
        <end position="70"/>
    </location>
</feature>
<feature type="region of interest" description="Disordered" evidence="4">
    <location>
        <begin position="1"/>
        <end position="55"/>
    </location>
</feature>
<feature type="region of interest" description="Required for interaction with TRIB1" evidence="1">
    <location>
        <begin position="54"/>
        <end position="72"/>
    </location>
</feature>
<feature type="region of interest" description="Required to induce adipocyte differentiation" evidence="5">
    <location>
        <begin position="126"/>
        <end position="200"/>
    </location>
</feature>
<feature type="region of interest" description="Disordered" evidence="4">
    <location>
        <begin position="176"/>
        <end position="195"/>
    </location>
</feature>
<feature type="region of interest" description="Required to functionally cooperate with SREBF1 in promoter activation" evidence="2">
    <location>
        <begin position="180"/>
        <end position="194"/>
    </location>
</feature>
<feature type="region of interest" description="Disordered" evidence="4">
    <location>
        <begin position="213"/>
        <end position="310"/>
    </location>
</feature>
<feature type="region of interest" description="Interaction with FOXO1" evidence="2">
    <location>
        <begin position="240"/>
        <end position="358"/>
    </location>
</feature>
<feature type="region of interest" description="Basic motif" evidence="3">
    <location>
        <begin position="286"/>
        <end position="313"/>
    </location>
</feature>
<feature type="region of interest" description="Leucine-zipper" evidence="3">
    <location>
        <begin position="317"/>
        <end position="345"/>
    </location>
</feature>
<feature type="compositionally biased region" description="Low complexity" evidence="4">
    <location>
        <begin position="29"/>
        <end position="38"/>
    </location>
</feature>
<feature type="compositionally biased region" description="Pro residues" evidence="4">
    <location>
        <begin position="39"/>
        <end position="49"/>
    </location>
</feature>
<feature type="compositionally biased region" description="Pro residues" evidence="4">
    <location>
        <begin position="179"/>
        <end position="191"/>
    </location>
</feature>
<feature type="compositionally biased region" description="Pro residues" evidence="4">
    <location>
        <begin position="220"/>
        <end position="234"/>
    </location>
</feature>
<feature type="compositionally biased region" description="Gly residues" evidence="4">
    <location>
        <begin position="261"/>
        <end position="271"/>
    </location>
</feature>
<feature type="compositionally biased region" description="Basic and acidic residues" evidence="4">
    <location>
        <begin position="276"/>
        <end position="292"/>
    </location>
</feature>
<feature type="modified residue" description="N6-acetyllysine; alternate" evidence="1">
    <location>
        <position position="159"/>
    </location>
</feature>
<feature type="modified residue" description="Phosphoserine" evidence="2">
    <location>
        <position position="193"/>
    </location>
</feature>
<feature type="modified residue" description="Phosphothreonine; by GSK3" evidence="2">
    <location>
        <position position="222"/>
    </location>
</feature>
<feature type="modified residue" description="Phosphothreonine; by GSK3" evidence="2">
    <location>
        <position position="226"/>
    </location>
</feature>
<feature type="modified residue" description="Phosphoserine; by GSK3" evidence="2">
    <location>
        <position position="230"/>
    </location>
</feature>
<feature type="cross-link" description="Glycyl lysine isopeptide (Lys-Gly) (interchain with G-Cter in SUMO); alternate" evidence="8">
    <location>
        <position position="159"/>
    </location>
</feature>
<feature type="cross-link" description="Glycyl lysine isopeptide (Lys-Gly) (interchain with G-Cter in SUMO2); alternate" evidence="1">
    <location>
        <position position="159"/>
    </location>
</feature>
<feature type="splice variant" id="VSP_057551" description="In isoform 3." evidence="12">
    <location>
        <begin position="1"/>
        <end position="117"/>
    </location>
</feature>
<feature type="splice variant" id="VSP_057552" description="In isoform 2." evidence="12">
    <location>
        <begin position="1"/>
        <end position="14"/>
    </location>
</feature>
<feature type="splice variant" id="VSP_057609" description="In isoform 4.">
    <original>M</original>
    <variation>MRGRGRVGVLGGRRRQRRHAQAGGRRGSPCRENSNSPM</variation>
    <location>
        <position position="1"/>
    </location>
</feature>
<feature type="mutagenesis site" description="Not sumoylated. No effect of sumoylation on cell cycle inhibition." evidence="8">
    <original>K</original>
    <variation>A</variation>
    <variation>R</variation>
    <location>
        <position position="159"/>
    </location>
</feature>
<feature type="mutagenesis site" description="Decreased transcription factor activity. Strongly decreased transcription factor activity; when associated with R-293." evidence="6">
    <original>Y</original>
    <variation>A</variation>
    <location>
        <position position="285"/>
    </location>
</feature>
<feature type="mutagenesis site" description="Increases interaction with TFDP1 and TFDP2, reduces DNA-binding, transactivation activity and represses E2F1:TFDP1-mediated transcription, loss of cell cycle inhibition and adipogenesis induction." evidence="5 11">
    <original>Y</original>
    <variation>A</variation>
    <location>
        <position position="285"/>
    </location>
</feature>
<feature type="mutagenesis site" description="No effect on repression of E2F1:TFDP1-mediated transcription, no effect on cell cycle inhibition or adipogenesis; when associated with A-290." evidence="5">
    <original>V</original>
    <variation>A</variation>
    <location>
        <position position="287"/>
    </location>
</feature>
<feature type="mutagenesis site" description="Loss of DNA-binding and transcription factor activity." evidence="6">
    <original>R</original>
    <variation>A</variation>
    <location>
        <position position="289"/>
    </location>
</feature>
<feature type="mutagenesis site" description="No effect on repression of E2F1:TFDP1-mediated transcription, no effect on cell cycle inhibition or adipogenesis; when associated with A-287." evidence="5">
    <original>E</original>
    <variation>A</variation>
    <location>
        <position position="290"/>
    </location>
</feature>
<feature type="mutagenesis site" description="Decreased transcription factor activity. Strongly decreased transcription factor activity; when associated with A-285." evidence="6">
    <original>N</original>
    <variation>R</variation>
    <location>
        <position position="293"/>
    </location>
</feature>
<feature type="mutagenesis site" description="Increases interaction with TFDP1 and TFDP2, reduces transactivation activity and represses E2F1:TFDP1-mediated transcription, loss of cell cycle inhibition and adipogenesis induction, no effect on DNA-binding; when associated with A-297." evidence="5 11">
    <original>I</original>
    <variation>A</variation>
    <location>
        <position position="294"/>
    </location>
</feature>
<feature type="mutagenesis site" description="No effect on DNA-binding and transcription factor activity, but modified sequence specificity." evidence="6">
    <original>V</original>
    <variation>A</variation>
    <location>
        <position position="296"/>
    </location>
</feature>
<feature type="mutagenesis site" description="Increases interaction with TFDP1 and TFDP2, reduces transactivation activity and represses E2F1:TFDP1-mediated transcription, loss of cell cycle inhibition and adipogenesis induction, no effect on DNA-binding; when associated with A-294." evidence="5 11">
    <original>R</original>
    <variation>A</variation>
    <location>
        <position position="297"/>
    </location>
</feature>
<feature type="mutagenesis site" description="Isoform 4: Stimulates nucleolar retention of isoform 4. No effect on interaction with NPM1, TAF1A and UBTF." evidence="10">
    <original>S</original>
    <variation>D</variation>
    <location>
        <position position="299"/>
    </location>
</feature>
<feature type="mutagenesis site" description="No effect neither on interaction with TFDP1 or TFDP2 nor on transactivation activity or repression of E2F1:TFDP1-mediated transcription, no effect on cell cycle inhibition or adipogenesis; when associated with A-304." evidence="5 11">
    <original>D</original>
    <variation>A</variation>
    <location>
        <position position="301"/>
    </location>
</feature>
<feature type="mutagenesis site" description="No effect neither on interaction with TFDP1 or TFDP2 nor on transactivation activity or repression of E2F1:TFDP1-mediated transcription, no effect on cell cycle inhibition or adipogenesis; when associated with A-301." evidence="5 11">
    <original>K</original>
    <variation>A</variation>
    <location>
        <position position="304"/>
    </location>
</feature>
<feature type="helix" evidence="17">
    <location>
        <begin position="282"/>
        <end position="338"/>
    </location>
</feature>
<proteinExistence type="evidence at protein level"/>
<gene>
    <name evidence="16" type="primary">Cebpa</name>
</gene>